<proteinExistence type="evidence at transcript level"/>
<comment type="function">
    <text evidence="1">Translation factor that promotes translation elongation and termination, particularly upon ribosome stalling at specific amino acid sequence contexts. Binds between the exit (E) and peptidyl (P) site of the ribosome and promotes rescue of stalled ribosome: specifically required for efficient translation of polyproline-containing peptides as well as other motifs that stall the ribosome. Acts as a ribosome quality control (RQC) cofactor by joining the RQC complex to facilitate peptidyl transfer during CAT tailing step.</text>
</comment>
<comment type="subcellular location">
    <subcellularLocation>
        <location evidence="1">Cytoplasm</location>
    </subcellularLocation>
</comment>
<comment type="PTM">
    <text evidence="2">Lys-52 undergoes hypusination, a unique post-translational modification that consists in the addition of a butylamino group from spermidine to lysine side chain, leading to the formation of the unusual amino acid hypusine. eIF-5As are the only known proteins to undergo this modification, which is essential for their function.</text>
</comment>
<comment type="similarity">
    <text evidence="3">Belongs to the eIF-5A family.</text>
</comment>
<sequence>MADIEDTHFETGDSGASATFPMQCSALRKNGFVMLKGRPCKIVEMSTSKTGKHGHAKVHLVGIDIFNGKKYEDICPSTHNMDVPHVKREDYQLTDISDDGYLTLMADNGDLREDLKIPDGDLGTQLRSDFDSGKELLCTVLKSCGEECVIAVKANTALDK</sequence>
<gene>
    <name type="primary">eIF-5A</name>
    <name type="synonym">eIF5A</name>
</gene>
<accession>P62924</accession>
<accession>Q9TVJ8</accession>
<protein>
    <recommendedName>
        <fullName>Eukaryotic translation initiation factor 5A</fullName>
        <shortName>eIF-5A</shortName>
    </recommendedName>
</protein>
<feature type="chain" id="PRO_0000142461" description="Eukaryotic translation initiation factor 5A">
    <location>
        <begin position="1"/>
        <end position="160"/>
    </location>
</feature>
<feature type="modified residue" description="Hypusine" evidence="2">
    <location>
        <position position="52"/>
    </location>
</feature>
<reference key="1">
    <citation type="journal article" date="1999" name="Insect Mol. Biol.">
        <title>Cloning and analysis of cDNAs encoding the hypusine-containing protein eIF5A of two lepidopteran insect species.</title>
        <authorList>
            <person name="van Oers M.M."/>
            <person name="van Marwijk M."/>
            <person name="Kwa M.S.G."/>
            <person name="Vlak J.M."/>
            <person name="Thomas A.A.M."/>
        </authorList>
    </citation>
    <scope>NUCLEOTIDE SEQUENCE [MRNA]</scope>
    <source>
        <tissue>Midgut</tissue>
        <tissue>Ovary</tissue>
    </source>
</reference>
<name>IF5A_SPOEX</name>
<organism>
    <name type="scientific">Spodoptera exigua</name>
    <name type="common">Beet armyworm</name>
    <name type="synonym">Noctua fulgens</name>
    <dbReference type="NCBI Taxonomy" id="7107"/>
    <lineage>
        <taxon>Eukaryota</taxon>
        <taxon>Metazoa</taxon>
        <taxon>Ecdysozoa</taxon>
        <taxon>Arthropoda</taxon>
        <taxon>Hexapoda</taxon>
        <taxon>Insecta</taxon>
        <taxon>Pterygota</taxon>
        <taxon>Neoptera</taxon>
        <taxon>Endopterygota</taxon>
        <taxon>Lepidoptera</taxon>
        <taxon>Glossata</taxon>
        <taxon>Ditrysia</taxon>
        <taxon>Noctuoidea</taxon>
        <taxon>Noctuidae</taxon>
        <taxon>Amphipyrinae</taxon>
        <taxon>Spodoptera</taxon>
    </lineage>
</organism>
<dbReference type="EMBL" id="AF109730">
    <property type="protein sequence ID" value="AAF13315.1"/>
    <property type="molecule type" value="mRNA"/>
</dbReference>
<dbReference type="SMR" id="P62924"/>
<dbReference type="GO" id="GO:0005737">
    <property type="term" value="C:cytoplasm"/>
    <property type="evidence" value="ECO:0007669"/>
    <property type="project" value="UniProtKB-SubCell"/>
</dbReference>
<dbReference type="GO" id="GO:0043022">
    <property type="term" value="F:ribosome binding"/>
    <property type="evidence" value="ECO:0007669"/>
    <property type="project" value="InterPro"/>
</dbReference>
<dbReference type="GO" id="GO:0003723">
    <property type="term" value="F:RNA binding"/>
    <property type="evidence" value="ECO:0007669"/>
    <property type="project" value="UniProtKB-KW"/>
</dbReference>
<dbReference type="GO" id="GO:0003746">
    <property type="term" value="F:translation elongation factor activity"/>
    <property type="evidence" value="ECO:0007669"/>
    <property type="project" value="UniProtKB-KW"/>
</dbReference>
<dbReference type="GO" id="GO:0045901">
    <property type="term" value="P:positive regulation of translational elongation"/>
    <property type="evidence" value="ECO:0007669"/>
    <property type="project" value="InterPro"/>
</dbReference>
<dbReference type="GO" id="GO:0045905">
    <property type="term" value="P:positive regulation of translational termination"/>
    <property type="evidence" value="ECO:0007669"/>
    <property type="project" value="InterPro"/>
</dbReference>
<dbReference type="CDD" id="cd04468">
    <property type="entry name" value="S1_eIF5A"/>
    <property type="match status" value="1"/>
</dbReference>
<dbReference type="FunFam" id="2.30.30.30:FF:000007">
    <property type="entry name" value="Eukaryotic translation initiation factor 5A"/>
    <property type="match status" value="1"/>
</dbReference>
<dbReference type="FunFam" id="2.40.50.140:FF:000034">
    <property type="entry name" value="Eukaryotic translation initiation factor 5A"/>
    <property type="match status" value="1"/>
</dbReference>
<dbReference type="Gene3D" id="2.30.30.30">
    <property type="match status" value="1"/>
</dbReference>
<dbReference type="Gene3D" id="2.40.50.140">
    <property type="entry name" value="Nucleic acid-binding proteins"/>
    <property type="match status" value="1"/>
</dbReference>
<dbReference type="InterPro" id="IPR001884">
    <property type="entry name" value="IF5A-like"/>
</dbReference>
<dbReference type="InterPro" id="IPR048670">
    <property type="entry name" value="IF5A-like_N"/>
</dbReference>
<dbReference type="InterPro" id="IPR012340">
    <property type="entry name" value="NA-bd_OB-fold"/>
</dbReference>
<dbReference type="InterPro" id="IPR014722">
    <property type="entry name" value="Rib_uL2_dom2"/>
</dbReference>
<dbReference type="InterPro" id="IPR019769">
    <property type="entry name" value="Trans_elong_IF5A_hypusine_site"/>
</dbReference>
<dbReference type="InterPro" id="IPR020189">
    <property type="entry name" value="Transl_elong_IF5A_C"/>
</dbReference>
<dbReference type="InterPro" id="IPR008991">
    <property type="entry name" value="Translation_prot_SH3-like_sf"/>
</dbReference>
<dbReference type="NCBIfam" id="TIGR00037">
    <property type="entry name" value="eIF_5A"/>
    <property type="match status" value="1"/>
</dbReference>
<dbReference type="PANTHER" id="PTHR11673">
    <property type="entry name" value="TRANSLATION INITIATION FACTOR 5A FAMILY MEMBER"/>
    <property type="match status" value="1"/>
</dbReference>
<dbReference type="Pfam" id="PF01287">
    <property type="entry name" value="eIF-5a"/>
    <property type="match status" value="1"/>
</dbReference>
<dbReference type="Pfam" id="PF21485">
    <property type="entry name" value="IF5A-like_N"/>
    <property type="match status" value="1"/>
</dbReference>
<dbReference type="PIRSF" id="PIRSF003025">
    <property type="entry name" value="eIF5A"/>
    <property type="match status" value="1"/>
</dbReference>
<dbReference type="SMART" id="SM01376">
    <property type="entry name" value="eIF-5a"/>
    <property type="match status" value="1"/>
</dbReference>
<dbReference type="SUPFAM" id="SSF50249">
    <property type="entry name" value="Nucleic acid-binding proteins"/>
    <property type="match status" value="1"/>
</dbReference>
<dbReference type="SUPFAM" id="SSF50104">
    <property type="entry name" value="Translation proteins SH3-like domain"/>
    <property type="match status" value="1"/>
</dbReference>
<dbReference type="PROSITE" id="PS00302">
    <property type="entry name" value="IF5A_HYPUSINE"/>
    <property type="match status" value="1"/>
</dbReference>
<keyword id="KW-0963">Cytoplasm</keyword>
<keyword id="KW-0251">Elongation factor</keyword>
<keyword id="KW-0385">Hypusine</keyword>
<keyword id="KW-0648">Protein biosynthesis</keyword>
<keyword id="KW-0694">RNA-binding</keyword>
<evidence type="ECO:0000250" key="1">
    <source>
        <dbReference type="UniProtKB" id="P23301"/>
    </source>
</evidence>
<evidence type="ECO:0000250" key="2">
    <source>
        <dbReference type="UniProtKB" id="P63241"/>
    </source>
</evidence>
<evidence type="ECO:0000305" key="3"/>